<dbReference type="EMBL" id="AF050165">
    <property type="protein sequence ID" value="AAC98973.1"/>
    <property type="molecule type" value="mRNA"/>
</dbReference>
<dbReference type="SMR" id="Q9Z176"/>
<dbReference type="FunCoup" id="Q9Z176">
    <property type="interactions" value="619"/>
</dbReference>
<dbReference type="STRING" id="10090.ENSMUSP00000137530"/>
<dbReference type="GlyGen" id="Q9Z176">
    <property type="glycosylation" value="1 site, 1 O-linked glycan (1 site)"/>
</dbReference>
<dbReference type="iPTMnet" id="Q9Z176"/>
<dbReference type="PhosphoSitePlus" id="Q9Z176"/>
<dbReference type="PaxDb" id="10090-ENSMUSP00000137530"/>
<dbReference type="ProteomicsDB" id="294297"/>
<dbReference type="Pumba" id="Q9Z176"/>
<dbReference type="AGR" id="MGI:1335093"/>
<dbReference type="MGI" id="MGI:1335093">
    <property type="gene designation" value="Ppp2r3d"/>
</dbReference>
<dbReference type="eggNOG" id="KOG2562">
    <property type="taxonomic scope" value="Eukaryota"/>
</dbReference>
<dbReference type="InParanoid" id="Q9Z176"/>
<dbReference type="Reactome" id="R-MMU-113501">
    <property type="pathway name" value="Inhibition of replication initiation of damaged DNA by RB1/E2F1"/>
</dbReference>
<dbReference type="Reactome" id="R-MMU-69231">
    <property type="pathway name" value="Cyclin D associated events in G1"/>
</dbReference>
<dbReference type="Reactome" id="R-MMU-69273">
    <property type="pathway name" value="Cyclin A/B1/B2 associated events during G2/M transition"/>
</dbReference>
<dbReference type="ChiTaRS" id="Ppp2r3d">
    <property type="organism name" value="mouse"/>
</dbReference>
<dbReference type="PRO" id="PR:Q9Z176"/>
<dbReference type="Proteomes" id="UP000000589">
    <property type="component" value="Unplaced"/>
</dbReference>
<dbReference type="RNAct" id="Q9Z176">
    <property type="molecule type" value="protein"/>
</dbReference>
<dbReference type="GO" id="GO:0000159">
    <property type="term" value="C:protein phosphatase type 2A complex"/>
    <property type="evidence" value="ECO:0000314"/>
    <property type="project" value="MGI"/>
</dbReference>
<dbReference type="GO" id="GO:0005509">
    <property type="term" value="F:calcium ion binding"/>
    <property type="evidence" value="ECO:0007669"/>
    <property type="project" value="InterPro"/>
</dbReference>
<dbReference type="GO" id="GO:0004723">
    <property type="term" value="F:calcium-dependent protein serine/threonine phosphatase activity"/>
    <property type="evidence" value="ECO:0000314"/>
    <property type="project" value="MGI"/>
</dbReference>
<dbReference type="GO" id="GO:0003682">
    <property type="term" value="F:chromatin binding"/>
    <property type="evidence" value="ECO:0000314"/>
    <property type="project" value="MGI"/>
</dbReference>
<dbReference type="GO" id="GO:0019888">
    <property type="term" value="F:protein phosphatase regulator activity"/>
    <property type="evidence" value="ECO:0000314"/>
    <property type="project" value="MGI"/>
</dbReference>
<dbReference type="GO" id="GO:0008285">
    <property type="term" value="P:negative regulation of cell population proliferation"/>
    <property type="evidence" value="ECO:0000314"/>
    <property type="project" value="MGI"/>
</dbReference>
<dbReference type="GO" id="GO:2000134">
    <property type="term" value="P:negative regulation of G1/S transition of mitotic cell cycle"/>
    <property type="evidence" value="ECO:0000314"/>
    <property type="project" value="MGI"/>
</dbReference>
<dbReference type="FunFam" id="1.10.238.220:FF:000001">
    <property type="entry name" value="Serine/threonine-protein phosphatase 2A regulatory subunit B'' subunit alpha"/>
    <property type="match status" value="1"/>
</dbReference>
<dbReference type="FunFam" id="1.10.238.10:FF:000025">
    <property type="entry name" value="serine/threonine-protein phosphatase 2A regulatory subunit B'' subunit alpha"/>
    <property type="match status" value="1"/>
</dbReference>
<dbReference type="FunFam" id="1.10.238.230:FF:000001">
    <property type="entry name" value="Serine/threonine-protein phosphatase 2A regulatory subunit B'' subunit beta"/>
    <property type="match status" value="1"/>
</dbReference>
<dbReference type="Gene3D" id="1.10.238.220">
    <property type="match status" value="1"/>
</dbReference>
<dbReference type="Gene3D" id="1.10.238.230">
    <property type="match status" value="1"/>
</dbReference>
<dbReference type="Gene3D" id="1.10.238.10">
    <property type="entry name" value="EF-hand"/>
    <property type="match status" value="1"/>
</dbReference>
<dbReference type="InterPro" id="IPR011992">
    <property type="entry name" value="EF-hand-dom_pair"/>
</dbReference>
<dbReference type="InterPro" id="IPR041534">
    <property type="entry name" value="EF-hand_13"/>
</dbReference>
<dbReference type="InterPro" id="IPR018247">
    <property type="entry name" value="EF_Hand_1_Ca_BS"/>
</dbReference>
<dbReference type="InterPro" id="IPR002048">
    <property type="entry name" value="EF_hand_dom"/>
</dbReference>
<dbReference type="InterPro" id="IPR048855">
    <property type="entry name" value="P2R3A_B_D_EF-hand"/>
</dbReference>
<dbReference type="PANTHER" id="PTHR14095">
    <property type="entry name" value="PHOSPHATASE 2A REGULATORY SUBUNIT-RELATED"/>
    <property type="match status" value="1"/>
</dbReference>
<dbReference type="PANTHER" id="PTHR14095:SF1">
    <property type="entry name" value="SERINE_THREONINE-PROTEIN PHOSPHATASE 2A REGULATORY SUBUNIT B'' SUBUNIT BETA"/>
    <property type="match status" value="1"/>
</dbReference>
<dbReference type="Pfam" id="PF17958">
    <property type="entry name" value="EF-hand_13"/>
    <property type="match status" value="1"/>
</dbReference>
<dbReference type="Pfam" id="PF13202">
    <property type="entry name" value="EF-hand_5"/>
    <property type="match status" value="1"/>
</dbReference>
<dbReference type="Pfam" id="PF21161">
    <property type="entry name" value="P2R3B_EF-hand"/>
    <property type="match status" value="1"/>
</dbReference>
<dbReference type="SUPFAM" id="SSF47473">
    <property type="entry name" value="EF-hand"/>
    <property type="match status" value="2"/>
</dbReference>
<dbReference type="PROSITE" id="PS00018">
    <property type="entry name" value="EF_HAND_1"/>
    <property type="match status" value="1"/>
</dbReference>
<sequence length="491" mass="55706">MPERPPIRALRRDPDDPAVAQALASLARGSDLVFPSRFQKWLRDFRQVHAHRKEEPPPQSPPPGHTVPAFYFPCGRPPPRPQDTEDAIALVECAFEGLPRGRAGLGDMAVVAKACGCPLYWKAPLFYAAGGERTGSVSVHMFVAMWRKVLLTCHDDAARFVRLLGHPGCSGLIQEDFVPFLQDVVNSHPGLAFLRAAKDFHSRYITTVIQRIFYTVNRSWSGMISREELRRSSFLQAVSQLEVEPDINRMTSFFSYEHFYVIYCKFWELDLDRDLTIDRSDLARHGDGAISSRMIDRIFSGAVTRARLPRKVGKLSYADFVWFLLSEEDKTTPTSTEYWFRCMDLDGDGALSMFELEFFYEEQAQRMAARGVEPLPFHDLARQVLDLVAPRCPGRITLRDLKQCGLAGEFFDAFFNVDKYLAREQREQAGTPQDTDSDPAASAWDRYAAEEYDFLVAEEAMAEDDDDHDEGSDPIDLYGLADEDCDDLEPL</sequence>
<evidence type="ECO:0000255" key="1">
    <source>
        <dbReference type="PROSITE-ProRule" id="PRU10142"/>
    </source>
</evidence>
<evidence type="ECO:0000256" key="2">
    <source>
        <dbReference type="SAM" id="MobiDB-lite"/>
    </source>
</evidence>
<organism>
    <name type="scientific">Mus musculus</name>
    <name type="common">Mouse</name>
    <dbReference type="NCBI Taxonomy" id="10090"/>
    <lineage>
        <taxon>Eukaryota</taxon>
        <taxon>Metazoa</taxon>
        <taxon>Chordata</taxon>
        <taxon>Craniata</taxon>
        <taxon>Vertebrata</taxon>
        <taxon>Euteleostomi</taxon>
        <taxon>Mammalia</taxon>
        <taxon>Eutheria</taxon>
        <taxon>Euarchontoglires</taxon>
        <taxon>Glires</taxon>
        <taxon>Rodentia</taxon>
        <taxon>Myomorpha</taxon>
        <taxon>Muroidea</taxon>
        <taxon>Muridae</taxon>
        <taxon>Murinae</taxon>
        <taxon>Mus</taxon>
        <taxon>Mus</taxon>
    </lineage>
</organism>
<comment type="function">
    <text>The B regulatory subunit might modulate substrate selectivity and catalytic activity, and might also direct the localization of the catalytic enzyme to a particular subcellular compartment. Interacts with retinoblastoma-related protein p107 (in vivo). May target PP2A core dimer to p107 resulting in dephosphorylation of p107.</text>
</comment>
<comment type="subunit">
    <text>PP2A consists of a common heterodimeric core enzyme, composed of a 36 kDa catalytic subunit (subunit C) and a 65 kDa constant regulatory subunit (PR65 or subunit A), that associates with a variety of regulatory subunits. Proteins that associate with the core dimer include three families of regulatory subunits B (the R2/B/PR55/B55, R3/B''/PR72/PR130/PR59 and R5/B'/B56 families), the 48 kDa variable regulatory subunit, viral proteins, and cell signaling molecules.</text>
</comment>
<comment type="tissue specificity">
    <text>Expressed in testis, kidney, liver, lung, spleen, brain and heart.</text>
</comment>
<proteinExistence type="evidence at transcript level"/>
<accession>Q9Z176</accession>
<name>P2R3D_MOUSE</name>
<protein>
    <recommendedName>
        <fullName>Serine/threonine-protein phosphatase 2A regulatory subunit B'' subunit delta</fullName>
    </recommendedName>
    <alternativeName>
        <fullName>PP2A B''-PR59</fullName>
    </alternativeName>
    <alternativeName>
        <fullName>PP2A PR59</fullName>
    </alternativeName>
    <alternativeName>
        <fullName>Protein phosphatase 2A, 59 kDa regulatory subunit B</fullName>
    </alternativeName>
    <alternativeName>
        <fullName>Serine/threonine-protein phosphatase 2A regulatory subunit B'' subunit alpha</fullName>
    </alternativeName>
</protein>
<feature type="chain" id="PRO_0000071445" description="Serine/threonine-protein phosphatase 2A regulatory subunit B'' subunit delta">
    <location>
        <begin position="1"/>
        <end position="491"/>
    </location>
</feature>
<feature type="domain" description="EF-hand">
    <location>
        <begin position="331"/>
        <end position="366"/>
    </location>
</feature>
<feature type="region of interest" description="Disordered" evidence="2">
    <location>
        <begin position="460"/>
        <end position="491"/>
    </location>
</feature>
<feature type="compositionally biased region" description="Acidic residues" evidence="2">
    <location>
        <begin position="460"/>
        <end position="473"/>
    </location>
</feature>
<feature type="compositionally biased region" description="Acidic residues" evidence="2">
    <location>
        <begin position="481"/>
        <end position="491"/>
    </location>
</feature>
<feature type="binding site" evidence="1">
    <location>
        <position position="344"/>
    </location>
    <ligand>
        <name>Ca(2+)</name>
        <dbReference type="ChEBI" id="CHEBI:29108"/>
    </ligand>
</feature>
<feature type="binding site" evidence="1">
    <location>
        <position position="346"/>
    </location>
    <ligand>
        <name>Ca(2+)</name>
        <dbReference type="ChEBI" id="CHEBI:29108"/>
    </ligand>
</feature>
<feature type="binding site" evidence="1">
    <location>
        <position position="348"/>
    </location>
    <ligand>
        <name>Ca(2+)</name>
        <dbReference type="ChEBI" id="CHEBI:29108"/>
    </ligand>
</feature>
<feature type="binding site" evidence="1">
    <location>
        <position position="355"/>
    </location>
    <ligand>
        <name>Ca(2+)</name>
        <dbReference type="ChEBI" id="CHEBI:29108"/>
    </ligand>
</feature>
<reference key="1">
    <citation type="journal article" date="1999" name="Oncogene">
        <title>Functional interaction between a novel protein phosphatase 2A regulatory subunit, PR59, and the retinoblastoma-related p107 protein.</title>
        <authorList>
            <person name="Voorhoeve P.M."/>
            <person name="Hijmans E.M."/>
            <person name="Bernards R."/>
        </authorList>
    </citation>
    <scope>NUCLEOTIDE SEQUENCE [MRNA]</scope>
    <source>
        <tissue>Teratocarcinoma</tissue>
    </source>
</reference>
<keyword id="KW-0106">Calcium</keyword>
<keyword id="KW-0479">Metal-binding</keyword>
<keyword id="KW-1185">Reference proteome</keyword>
<gene>
    <name type="primary">Ppp2r3d</name>
    <name type="synonym">Ppp2r3a</name>
    <name type="synonym">Ppp2r6</name>
</gene>